<protein>
    <recommendedName>
        <fullName>Chemotaxis protein CheY</fullName>
    </recommendedName>
</protein>
<keyword id="KW-0007">Acetylation</keyword>
<keyword id="KW-0963">Cytoplasm</keyword>
<keyword id="KW-0460">Magnesium</keyword>
<keyword id="KW-0479">Metal-binding</keyword>
<keyword id="KW-0597">Phosphoprotein</keyword>
<keyword id="KW-1185">Reference proteome</keyword>
<keyword id="KW-0902">Two-component regulatory system</keyword>
<sequence>MADKNLRFLVVDDFSTMRRIVRNLLKELGFHNVEEAEDGVDALNKLRAGGFDFVVSDWNMPNMDGLDLLKTIRTDGALATLPVLMVTAEAKKENIIAAAQAGASGYVVKPFTAATLEEKLNKIFEKLGM</sequence>
<evidence type="ECO:0000250" key="1"/>
<evidence type="ECO:0000250" key="2">
    <source>
        <dbReference type="UniProtKB" id="A0A0H3AMJ9"/>
    </source>
</evidence>
<evidence type="ECO:0000250" key="3">
    <source>
        <dbReference type="UniProtKB" id="P0AE67"/>
    </source>
</evidence>
<evidence type="ECO:0000255" key="4">
    <source>
        <dbReference type="PROSITE-ProRule" id="PRU00169"/>
    </source>
</evidence>
<evidence type="ECO:0000305" key="5"/>
<name>CHEY_YERPE</name>
<accession>Q8D0P1</accession>
<accession>Q0WGA3</accession>
<accession>Q8ZFL9</accession>
<comment type="function">
    <text evidence="3">Involved in the transmission of sensory signals from the chemoreceptors to the flagellar motors. In its active (phosphorylated or acetylated) form, CheY exhibits enhanced binding to a switch component, FliM, at the flagellar motor which induces a change from counterclockwise to clockwise flagellar rotation (By similarity).</text>
</comment>
<comment type="cofactor">
    <cofactor evidence="3">
        <name>Mg(2+)</name>
        <dbReference type="ChEBI" id="CHEBI:18420"/>
    </cofactor>
    <text evidence="3">Binds 1 Mg(2+) ion per subunit.</text>
</comment>
<comment type="subcellular location">
    <subcellularLocation>
        <location evidence="5">Cytoplasm</location>
    </subcellularLocation>
</comment>
<comment type="PTM">
    <text evidence="3">Phosphorylated by CheA or acetylated by acetyl-CoA synthetase, depending on which acetate metabolism pathway is available.</text>
</comment>
<comment type="sequence caution" evidence="5">
    <conflict type="erroneous initiation">
        <sequence resource="EMBL-CDS" id="AAM85409"/>
    </conflict>
</comment>
<comment type="sequence caution" evidence="5">
    <conflict type="erroneous initiation">
        <sequence resource="EMBL-CDS" id="AAS62035"/>
    </conflict>
</comment>
<proteinExistence type="inferred from homology"/>
<feature type="initiator methionine" description="Removed" evidence="1">
    <location>
        <position position="1"/>
    </location>
</feature>
<feature type="chain" id="PRO_0000081048" description="Chemotaxis protein CheY">
    <location>
        <begin position="2"/>
        <end position="129"/>
    </location>
</feature>
<feature type="domain" description="Response regulatory" evidence="4">
    <location>
        <begin position="7"/>
        <end position="124"/>
    </location>
</feature>
<feature type="binding site" evidence="2">
    <location>
        <position position="12"/>
    </location>
    <ligand>
        <name>Mg(2+)</name>
        <dbReference type="ChEBI" id="CHEBI:18420"/>
    </ligand>
</feature>
<feature type="binding site" evidence="3">
    <location>
        <position position="13"/>
    </location>
    <ligand>
        <name>Mg(2+)</name>
        <dbReference type="ChEBI" id="CHEBI:18420"/>
    </ligand>
</feature>
<feature type="binding site" evidence="3">
    <location>
        <position position="57"/>
    </location>
    <ligand>
        <name>Mg(2+)</name>
        <dbReference type="ChEBI" id="CHEBI:18420"/>
    </ligand>
</feature>
<feature type="binding site" evidence="3">
    <location>
        <position position="59"/>
    </location>
    <ligand>
        <name>Mg(2+)</name>
        <dbReference type="ChEBI" id="CHEBI:18420"/>
    </ligand>
</feature>
<feature type="modified residue" description="4-aspartylphosphate" evidence="4">
    <location>
        <position position="57"/>
    </location>
</feature>
<feature type="modified residue" description="N6-acetyllysine" evidence="1">
    <location>
        <position position="92"/>
    </location>
</feature>
<feature type="modified residue" description="N6-acetyllysine" evidence="1">
    <location>
        <position position="109"/>
    </location>
</feature>
<organism>
    <name type="scientific">Yersinia pestis</name>
    <dbReference type="NCBI Taxonomy" id="632"/>
    <lineage>
        <taxon>Bacteria</taxon>
        <taxon>Pseudomonadati</taxon>
        <taxon>Pseudomonadota</taxon>
        <taxon>Gammaproteobacteria</taxon>
        <taxon>Enterobacterales</taxon>
        <taxon>Yersiniaceae</taxon>
        <taxon>Yersinia</taxon>
    </lineage>
</organism>
<gene>
    <name type="primary">cheY</name>
    <name type="ordered locus">YPO1680</name>
    <name type="ordered locus">y1842</name>
    <name type="ordered locus">YP_1810</name>
</gene>
<reference key="1">
    <citation type="journal article" date="2001" name="Nature">
        <title>Genome sequence of Yersinia pestis, the causative agent of plague.</title>
        <authorList>
            <person name="Parkhill J."/>
            <person name="Wren B.W."/>
            <person name="Thomson N.R."/>
            <person name="Titball R.W."/>
            <person name="Holden M.T.G."/>
            <person name="Prentice M.B."/>
            <person name="Sebaihia M."/>
            <person name="James K.D."/>
            <person name="Churcher C.M."/>
            <person name="Mungall K.L."/>
            <person name="Baker S."/>
            <person name="Basham D."/>
            <person name="Bentley S.D."/>
            <person name="Brooks K."/>
            <person name="Cerdeno-Tarraga A.-M."/>
            <person name="Chillingworth T."/>
            <person name="Cronin A."/>
            <person name="Davies R.M."/>
            <person name="Davis P."/>
            <person name="Dougan G."/>
            <person name="Feltwell T."/>
            <person name="Hamlin N."/>
            <person name="Holroyd S."/>
            <person name="Jagels K."/>
            <person name="Karlyshev A.V."/>
            <person name="Leather S."/>
            <person name="Moule S."/>
            <person name="Oyston P.C.F."/>
            <person name="Quail M.A."/>
            <person name="Rutherford K.M."/>
            <person name="Simmonds M."/>
            <person name="Skelton J."/>
            <person name="Stevens K."/>
            <person name="Whitehead S."/>
            <person name="Barrell B.G."/>
        </authorList>
    </citation>
    <scope>NUCLEOTIDE SEQUENCE [LARGE SCALE GENOMIC DNA]</scope>
    <source>
        <strain>CO-92 / Biovar Orientalis</strain>
    </source>
</reference>
<reference key="2">
    <citation type="journal article" date="2002" name="J. Bacteriol.">
        <title>Genome sequence of Yersinia pestis KIM.</title>
        <authorList>
            <person name="Deng W."/>
            <person name="Burland V."/>
            <person name="Plunkett G. III"/>
            <person name="Boutin A."/>
            <person name="Mayhew G.F."/>
            <person name="Liss P."/>
            <person name="Perna N.T."/>
            <person name="Rose D.J."/>
            <person name="Mau B."/>
            <person name="Zhou S."/>
            <person name="Schwartz D.C."/>
            <person name="Fetherston J.D."/>
            <person name="Lindler L.E."/>
            <person name="Brubaker R.R."/>
            <person name="Plano G.V."/>
            <person name="Straley S.C."/>
            <person name="McDonough K.A."/>
            <person name="Nilles M.L."/>
            <person name="Matson J.S."/>
            <person name="Blattner F.R."/>
            <person name="Perry R.D."/>
        </authorList>
    </citation>
    <scope>NUCLEOTIDE SEQUENCE [LARGE SCALE GENOMIC DNA]</scope>
    <source>
        <strain>KIM10+ / Biovar Mediaevalis</strain>
    </source>
</reference>
<reference key="3">
    <citation type="journal article" date="2004" name="DNA Res.">
        <title>Complete genome sequence of Yersinia pestis strain 91001, an isolate avirulent to humans.</title>
        <authorList>
            <person name="Song Y."/>
            <person name="Tong Z."/>
            <person name="Wang J."/>
            <person name="Wang L."/>
            <person name="Guo Z."/>
            <person name="Han Y."/>
            <person name="Zhang J."/>
            <person name="Pei D."/>
            <person name="Zhou D."/>
            <person name="Qin H."/>
            <person name="Pang X."/>
            <person name="Han Y."/>
            <person name="Zhai J."/>
            <person name="Li M."/>
            <person name="Cui B."/>
            <person name="Qi Z."/>
            <person name="Jin L."/>
            <person name="Dai R."/>
            <person name="Chen F."/>
            <person name="Li S."/>
            <person name="Ye C."/>
            <person name="Du Z."/>
            <person name="Lin W."/>
            <person name="Wang J."/>
            <person name="Yu J."/>
            <person name="Yang H."/>
            <person name="Wang J."/>
            <person name="Huang P."/>
            <person name="Yang R."/>
        </authorList>
    </citation>
    <scope>NUCLEOTIDE SEQUENCE [LARGE SCALE GENOMIC DNA]</scope>
    <source>
        <strain>91001 / Biovar Mediaevalis</strain>
    </source>
</reference>
<dbReference type="EMBL" id="AL590842">
    <property type="protein sequence ID" value="CAL20324.1"/>
    <property type="molecule type" value="Genomic_DNA"/>
</dbReference>
<dbReference type="EMBL" id="AE009952">
    <property type="protein sequence ID" value="AAM85409.1"/>
    <property type="status" value="ALT_INIT"/>
    <property type="molecule type" value="Genomic_DNA"/>
</dbReference>
<dbReference type="EMBL" id="AE017042">
    <property type="protein sequence ID" value="AAS62035.1"/>
    <property type="status" value="ALT_INIT"/>
    <property type="molecule type" value="Genomic_DNA"/>
</dbReference>
<dbReference type="PIR" id="AI0204">
    <property type="entry name" value="AI0204"/>
</dbReference>
<dbReference type="RefSeq" id="WP_002210873.1">
    <property type="nucleotide sequence ID" value="NZ_WUCM01000082.1"/>
</dbReference>
<dbReference type="RefSeq" id="YP_002346685.1">
    <property type="nucleotide sequence ID" value="NC_003143.1"/>
</dbReference>
<dbReference type="SMR" id="Q8D0P1"/>
<dbReference type="IntAct" id="Q8D0P1">
    <property type="interactions" value="5"/>
</dbReference>
<dbReference type="MINT" id="Q8D0P1"/>
<dbReference type="STRING" id="214092.YPO1680"/>
<dbReference type="PaxDb" id="214092-YPO1680"/>
<dbReference type="DNASU" id="1146789"/>
<dbReference type="EnsemblBacteria" id="AAS62035">
    <property type="protein sequence ID" value="AAS62035"/>
    <property type="gene ID" value="YP_1810"/>
</dbReference>
<dbReference type="GeneID" id="57976898"/>
<dbReference type="KEGG" id="ype:YPO1680"/>
<dbReference type="KEGG" id="ypk:y1842"/>
<dbReference type="KEGG" id="ypm:YP_1810"/>
<dbReference type="PATRIC" id="fig|214092.21.peg.2025"/>
<dbReference type="eggNOG" id="COG0745">
    <property type="taxonomic scope" value="Bacteria"/>
</dbReference>
<dbReference type="HOGENOM" id="CLU_000445_69_12_6"/>
<dbReference type="OMA" id="AAGAHEY"/>
<dbReference type="OrthoDB" id="9800897at2"/>
<dbReference type="Proteomes" id="UP000000815">
    <property type="component" value="Chromosome"/>
</dbReference>
<dbReference type="Proteomes" id="UP000001019">
    <property type="component" value="Chromosome"/>
</dbReference>
<dbReference type="Proteomes" id="UP000002490">
    <property type="component" value="Chromosome"/>
</dbReference>
<dbReference type="GO" id="GO:0005737">
    <property type="term" value="C:cytoplasm"/>
    <property type="evidence" value="ECO:0007669"/>
    <property type="project" value="UniProtKB-SubCell"/>
</dbReference>
<dbReference type="GO" id="GO:0046872">
    <property type="term" value="F:metal ion binding"/>
    <property type="evidence" value="ECO:0007669"/>
    <property type="project" value="UniProtKB-KW"/>
</dbReference>
<dbReference type="GO" id="GO:0000160">
    <property type="term" value="P:phosphorelay signal transduction system"/>
    <property type="evidence" value="ECO:0007669"/>
    <property type="project" value="UniProtKB-KW"/>
</dbReference>
<dbReference type="CDD" id="cd19923">
    <property type="entry name" value="REC_CheY_CheY3"/>
    <property type="match status" value="1"/>
</dbReference>
<dbReference type="FunFam" id="3.40.50.2300:FF:000019">
    <property type="entry name" value="Chemotaxis response regulator CheY"/>
    <property type="match status" value="1"/>
</dbReference>
<dbReference type="Gene3D" id="3.40.50.2300">
    <property type="match status" value="1"/>
</dbReference>
<dbReference type="InterPro" id="IPR011006">
    <property type="entry name" value="CheY-like_superfamily"/>
</dbReference>
<dbReference type="InterPro" id="IPR001789">
    <property type="entry name" value="Sig_transdc_resp-reg_receiver"/>
</dbReference>
<dbReference type="InterPro" id="IPR052048">
    <property type="entry name" value="ST_Response_Regulator"/>
</dbReference>
<dbReference type="NCBIfam" id="NF007901">
    <property type="entry name" value="PRK10610.1"/>
    <property type="match status" value="1"/>
</dbReference>
<dbReference type="PANTHER" id="PTHR43228">
    <property type="entry name" value="TWO-COMPONENT RESPONSE REGULATOR"/>
    <property type="match status" value="1"/>
</dbReference>
<dbReference type="PANTHER" id="PTHR43228:SF1">
    <property type="entry name" value="TWO-COMPONENT RESPONSE REGULATOR ARR22"/>
    <property type="match status" value="1"/>
</dbReference>
<dbReference type="Pfam" id="PF00072">
    <property type="entry name" value="Response_reg"/>
    <property type="match status" value="1"/>
</dbReference>
<dbReference type="SMART" id="SM00448">
    <property type="entry name" value="REC"/>
    <property type="match status" value="1"/>
</dbReference>
<dbReference type="SUPFAM" id="SSF52172">
    <property type="entry name" value="CheY-like"/>
    <property type="match status" value="1"/>
</dbReference>
<dbReference type="PROSITE" id="PS50110">
    <property type="entry name" value="RESPONSE_REGULATORY"/>
    <property type="match status" value="1"/>
</dbReference>